<proteinExistence type="inferred from homology"/>
<keyword id="KW-0131">Cell cycle</keyword>
<keyword id="KW-0132">Cell division</keyword>
<keyword id="KW-0238">DNA-binding</keyword>
<evidence type="ECO:0000255" key="1">
    <source>
        <dbReference type="HAMAP-Rule" id="MF_01420"/>
    </source>
</evidence>
<name>WHIA_CLOB8</name>
<sequence length="315" mass="35607">MSFSSKVKGEICRYIDISKEEALAEISAIMKVSGTLAFSGSGLSFKMTTENPASARLIFTLLKDHFNIHSKLMVKKSNSLKKNNIYMVVISEEMGVRGLLSDTGILKEIDGIMSLDYRIEEYIFKDEDIKRAYIRGAFIGGGSISNPEKTYHLEFVTHSEEYAKDLSNLINTFSLNSKVIQRKNSFIVYIKEGEQIVDLLNVIGAHSSLLEIENIRIMKEMRNNVNRLVNCETANLSKTVNAAVRQVESIKLIQSQIGMQRLPDNLREIAELRLNYPDESLKELGEMLDPPVGKSGINHRLRKIEKIAEELRTSK</sequence>
<feature type="chain" id="PRO_0000376456" description="Probable cell division protein WhiA">
    <location>
        <begin position="1"/>
        <end position="315"/>
    </location>
</feature>
<feature type="DNA-binding region" description="H-T-H motif" evidence="1">
    <location>
        <begin position="280"/>
        <end position="313"/>
    </location>
</feature>
<organism>
    <name type="scientific">Clostridium beijerinckii (strain ATCC 51743 / NCIMB 8052)</name>
    <name type="common">Clostridium acetobutylicum</name>
    <dbReference type="NCBI Taxonomy" id="290402"/>
    <lineage>
        <taxon>Bacteria</taxon>
        <taxon>Bacillati</taxon>
        <taxon>Bacillota</taxon>
        <taxon>Clostridia</taxon>
        <taxon>Eubacteriales</taxon>
        <taxon>Clostridiaceae</taxon>
        <taxon>Clostridium</taxon>
    </lineage>
</organism>
<protein>
    <recommendedName>
        <fullName evidence="1">Probable cell division protein WhiA</fullName>
    </recommendedName>
</protein>
<accession>A6M2Y1</accession>
<dbReference type="EMBL" id="CP000721">
    <property type="protein sequence ID" value="ABR36961.1"/>
    <property type="molecule type" value="Genomic_DNA"/>
</dbReference>
<dbReference type="RefSeq" id="WP_012061006.1">
    <property type="nucleotide sequence ID" value="NC_009617.1"/>
</dbReference>
<dbReference type="SMR" id="A6M2Y1"/>
<dbReference type="KEGG" id="cbe:Cbei_4855"/>
<dbReference type="eggNOG" id="COG1481">
    <property type="taxonomic scope" value="Bacteria"/>
</dbReference>
<dbReference type="HOGENOM" id="CLU_053282_0_0_9"/>
<dbReference type="Proteomes" id="UP000000565">
    <property type="component" value="Chromosome"/>
</dbReference>
<dbReference type="GO" id="GO:0003677">
    <property type="term" value="F:DNA binding"/>
    <property type="evidence" value="ECO:0007669"/>
    <property type="project" value="UniProtKB-UniRule"/>
</dbReference>
<dbReference type="GO" id="GO:0004519">
    <property type="term" value="F:endonuclease activity"/>
    <property type="evidence" value="ECO:0007669"/>
    <property type="project" value="InterPro"/>
</dbReference>
<dbReference type="GO" id="GO:0051301">
    <property type="term" value="P:cell division"/>
    <property type="evidence" value="ECO:0007669"/>
    <property type="project" value="UniProtKB-UniRule"/>
</dbReference>
<dbReference type="GO" id="GO:0043937">
    <property type="term" value="P:regulation of sporulation"/>
    <property type="evidence" value="ECO:0007669"/>
    <property type="project" value="InterPro"/>
</dbReference>
<dbReference type="Gene3D" id="3.10.28.10">
    <property type="entry name" value="Homing endonucleases"/>
    <property type="match status" value="1"/>
</dbReference>
<dbReference type="HAMAP" id="MF_01420">
    <property type="entry name" value="HTH_type_WhiA"/>
    <property type="match status" value="1"/>
</dbReference>
<dbReference type="InterPro" id="IPR027434">
    <property type="entry name" value="Homing_endonucl"/>
</dbReference>
<dbReference type="InterPro" id="IPR004042">
    <property type="entry name" value="Intein_endonuc_central"/>
</dbReference>
<dbReference type="InterPro" id="IPR018478">
    <property type="entry name" value="Sporu_reg_WhiA_N_dom"/>
</dbReference>
<dbReference type="InterPro" id="IPR003802">
    <property type="entry name" value="Sporulation_regulator_WhiA"/>
</dbReference>
<dbReference type="InterPro" id="IPR023054">
    <property type="entry name" value="Sporulation_regulator_WhiA_C"/>
</dbReference>
<dbReference type="InterPro" id="IPR039518">
    <property type="entry name" value="WhiA_LAGLIDADG_dom"/>
</dbReference>
<dbReference type="NCBIfam" id="TIGR00647">
    <property type="entry name" value="DNA_bind_WhiA"/>
    <property type="match status" value="1"/>
</dbReference>
<dbReference type="PANTHER" id="PTHR37307">
    <property type="entry name" value="CELL DIVISION PROTEIN WHIA-RELATED"/>
    <property type="match status" value="1"/>
</dbReference>
<dbReference type="PANTHER" id="PTHR37307:SF1">
    <property type="entry name" value="CELL DIVISION PROTEIN WHIA-RELATED"/>
    <property type="match status" value="1"/>
</dbReference>
<dbReference type="Pfam" id="PF02650">
    <property type="entry name" value="HTH_WhiA"/>
    <property type="match status" value="1"/>
</dbReference>
<dbReference type="Pfam" id="PF14527">
    <property type="entry name" value="LAGLIDADG_WhiA"/>
    <property type="match status" value="1"/>
</dbReference>
<dbReference type="Pfam" id="PF10298">
    <property type="entry name" value="WhiA_N"/>
    <property type="match status" value="1"/>
</dbReference>
<dbReference type="SUPFAM" id="SSF55608">
    <property type="entry name" value="Homing endonucleases"/>
    <property type="match status" value="1"/>
</dbReference>
<dbReference type="PROSITE" id="PS50819">
    <property type="entry name" value="INTEIN_ENDONUCLEASE"/>
    <property type="match status" value="1"/>
</dbReference>
<gene>
    <name evidence="1" type="primary">whiA</name>
    <name type="ordered locus">Cbei_4855</name>
</gene>
<reference key="1">
    <citation type="submission" date="2007-06" db="EMBL/GenBank/DDBJ databases">
        <title>Complete sequence of Clostridium beijerinckii NCIMB 8052.</title>
        <authorList>
            <consortium name="US DOE Joint Genome Institute"/>
            <person name="Copeland A."/>
            <person name="Lucas S."/>
            <person name="Lapidus A."/>
            <person name="Barry K."/>
            <person name="Detter J.C."/>
            <person name="Glavina del Rio T."/>
            <person name="Hammon N."/>
            <person name="Israni S."/>
            <person name="Dalin E."/>
            <person name="Tice H."/>
            <person name="Pitluck S."/>
            <person name="Sims D."/>
            <person name="Brettin T."/>
            <person name="Bruce D."/>
            <person name="Tapia R."/>
            <person name="Brainard J."/>
            <person name="Schmutz J."/>
            <person name="Larimer F."/>
            <person name="Land M."/>
            <person name="Hauser L."/>
            <person name="Kyrpides N."/>
            <person name="Mikhailova N."/>
            <person name="Bennet G."/>
            <person name="Cann I."/>
            <person name="Chen J.-S."/>
            <person name="Contreras A.L."/>
            <person name="Jones D."/>
            <person name="Kashket E."/>
            <person name="Mitchell W."/>
            <person name="Stoddard S."/>
            <person name="Schwarz W."/>
            <person name="Qureshi N."/>
            <person name="Young M."/>
            <person name="Shi Z."/>
            <person name="Ezeji T."/>
            <person name="White B."/>
            <person name="Blaschek H."/>
            <person name="Richardson P."/>
        </authorList>
    </citation>
    <scope>NUCLEOTIDE SEQUENCE [LARGE SCALE GENOMIC DNA]</scope>
    <source>
        <strain>ATCC 51743 / NCIMB 8052</strain>
    </source>
</reference>
<comment type="function">
    <text evidence="1">Involved in cell division and chromosome segregation.</text>
</comment>
<comment type="similarity">
    <text evidence="1">Belongs to the WhiA family.</text>
</comment>